<accession>P35387</accession>
<sequence>LAVPGILVPEALGLGNXV</sequence>
<evidence type="ECO:0000250" key="1">
    <source>
        <dbReference type="UniProtKB" id="P07371"/>
    </source>
</evidence>
<evidence type="ECO:0000255" key="2"/>
<evidence type="ECO:0000269" key="3">
    <source>
    </source>
</evidence>
<evidence type="ECO:0000303" key="4">
    <source>
    </source>
</evidence>
<evidence type="ECO:0000305" key="5"/>
<reference evidence="5" key="1">
    <citation type="journal article" date="1990" name="Eur. J. Biochem.">
        <title>Dicyclohexylcarbodiimide-binding proteins related to the short circuit of the proton-pumping activity of photosystem II. Identified as light-harvesting chlorophyll-a/b-binding proteins.</title>
        <authorList>
            <person name="Jahns P."/>
            <person name="Junge W."/>
        </authorList>
    </citation>
    <scope>PROTEIN SEQUENCE</scope>
    <scope>FUNCTION</scope>
    <source>
        <tissue evidence="3">Seedling</tissue>
    </source>
</reference>
<protein>
    <recommendedName>
        <fullName>Chlorophyll a-b binding protein 22, chloroplastic</fullName>
    </recommendedName>
    <alternativeName>
        <fullName>LHCII type I CAB-22</fullName>
    </alternativeName>
</protein>
<feature type="chain" id="PRO_0000310861" description="Chlorophyll a-b binding protein 22, chloroplastic">
    <location>
        <begin position="1" status="less than"/>
        <end position="18" status="greater than"/>
    </location>
</feature>
<feature type="non-terminal residue" evidence="4">
    <location>
        <position position="1"/>
    </location>
</feature>
<feature type="non-terminal residue" evidence="4">
    <location>
        <position position="18"/>
    </location>
</feature>
<dbReference type="GO" id="GO:0009535">
    <property type="term" value="C:chloroplast thylakoid membrane"/>
    <property type="evidence" value="ECO:0007669"/>
    <property type="project" value="UniProtKB-SubCell"/>
</dbReference>
<dbReference type="GO" id="GO:0009522">
    <property type="term" value="C:photosystem I"/>
    <property type="evidence" value="ECO:0007669"/>
    <property type="project" value="UniProtKB-KW"/>
</dbReference>
<dbReference type="GO" id="GO:0009523">
    <property type="term" value="C:photosystem II"/>
    <property type="evidence" value="ECO:0007669"/>
    <property type="project" value="UniProtKB-KW"/>
</dbReference>
<dbReference type="GO" id="GO:0016168">
    <property type="term" value="F:chlorophyll binding"/>
    <property type="evidence" value="ECO:0007669"/>
    <property type="project" value="UniProtKB-KW"/>
</dbReference>
<dbReference type="GO" id="GO:0046872">
    <property type="term" value="F:metal ion binding"/>
    <property type="evidence" value="ECO:0007669"/>
    <property type="project" value="UniProtKB-KW"/>
</dbReference>
<dbReference type="GO" id="GO:0015979">
    <property type="term" value="P:photosynthesis"/>
    <property type="evidence" value="ECO:0007669"/>
    <property type="project" value="UniProtKB-KW"/>
</dbReference>
<comment type="function">
    <text evidence="3 5">The light-harvesting complex (LHC) functions as a light receptor, it captures and delivers excitation energy to photosystems with which it is closely associated.</text>
</comment>
<comment type="function">
    <text evidence="3">May channel protons produced in the catalytic Mn center of water oxidation into the thylakoid lumen.</text>
</comment>
<comment type="cofactor">
    <text evidence="1">Binds at least 14 chlorophylls (8 Chl-a and 6 Chl-b) and carotenoids such as lutein and neoxanthin.</text>
</comment>
<comment type="subunit">
    <text evidence="5">The LHC complex consists of chlorophyll a-b binding proteins.</text>
</comment>
<comment type="subcellular location">
    <subcellularLocation>
        <location evidence="5">Plastid</location>
        <location evidence="5">Chloroplast thylakoid membrane</location>
        <topology evidence="5">Multi-pass membrane protein</topology>
    </subcellularLocation>
</comment>
<comment type="domain">
    <text evidence="5">The N-terminus of the protein extends into the stroma where it is involved with adhesion of granal membranes and post-translational modifications; both are believed to mediate the distribution of excitation energy between photosystems I and II.</text>
</comment>
<comment type="PTM">
    <text evidence="1">Photoregulated by reversible phosphorylation of its threonine residues.</text>
</comment>
<comment type="similarity">
    <text evidence="2">Belongs to the light-harvesting chlorophyll a/b-binding (LHC) protein family.</text>
</comment>
<proteinExistence type="evidence at protein level"/>
<name>CB222_PEA</name>
<organism>
    <name type="scientific">Pisum sativum</name>
    <name type="common">Garden pea</name>
    <name type="synonym">Lathyrus oleraceus</name>
    <dbReference type="NCBI Taxonomy" id="3888"/>
    <lineage>
        <taxon>Eukaryota</taxon>
        <taxon>Viridiplantae</taxon>
        <taxon>Streptophyta</taxon>
        <taxon>Embryophyta</taxon>
        <taxon>Tracheophyta</taxon>
        <taxon>Spermatophyta</taxon>
        <taxon>Magnoliopsida</taxon>
        <taxon>eudicotyledons</taxon>
        <taxon>Gunneridae</taxon>
        <taxon>Pentapetalae</taxon>
        <taxon>rosids</taxon>
        <taxon>fabids</taxon>
        <taxon>Fabales</taxon>
        <taxon>Fabaceae</taxon>
        <taxon>Papilionoideae</taxon>
        <taxon>50 kb inversion clade</taxon>
        <taxon>NPAAA clade</taxon>
        <taxon>Hologalegina</taxon>
        <taxon>IRL clade</taxon>
        <taxon>Fabeae</taxon>
        <taxon>Pisum</taxon>
    </lineage>
</organism>
<keyword id="KW-0148">Chlorophyll</keyword>
<keyword id="KW-0150">Chloroplast</keyword>
<keyword id="KW-0157">Chromophore</keyword>
<keyword id="KW-0903">Direct protein sequencing</keyword>
<keyword id="KW-0460">Magnesium</keyword>
<keyword id="KW-0472">Membrane</keyword>
<keyword id="KW-0479">Metal-binding</keyword>
<keyword id="KW-0597">Phosphoprotein</keyword>
<keyword id="KW-0602">Photosynthesis</keyword>
<keyword id="KW-0603">Photosystem I</keyword>
<keyword id="KW-0604">Photosystem II</keyword>
<keyword id="KW-0934">Plastid</keyword>
<keyword id="KW-0793">Thylakoid</keyword>